<protein>
    <recommendedName>
        <fullName evidence="9">Protein EXECUTER 1, chloroplastic</fullName>
        <shortName evidence="8">AtEX1</shortName>
    </recommendedName>
</protein>
<name>EXEC1_ARATH</name>
<gene>
    <name evidence="8" type="primary">EX1</name>
    <name evidence="10" type="ordered locus">At4g33630</name>
    <name evidence="11" type="ORF">T16L1.120</name>
</gene>
<dbReference type="EMBL" id="AY059742">
    <property type="protein sequence ID" value="AAL24154.1"/>
    <property type="molecule type" value="mRNA"/>
</dbReference>
<dbReference type="EMBL" id="AL031394">
    <property type="protein sequence ID" value="CAA20576.1"/>
    <property type="status" value="ALT_SEQ"/>
    <property type="molecule type" value="Genomic_DNA"/>
</dbReference>
<dbReference type="EMBL" id="AL161583">
    <property type="protein sequence ID" value="CAB80080.1"/>
    <property type="status" value="ALT_SEQ"/>
    <property type="molecule type" value="Genomic_DNA"/>
</dbReference>
<dbReference type="EMBL" id="CP002687">
    <property type="protein sequence ID" value="AEE86257.1"/>
    <property type="molecule type" value="Genomic_DNA"/>
</dbReference>
<dbReference type="EMBL" id="CP002687">
    <property type="protein sequence ID" value="AEE86258.1"/>
    <property type="molecule type" value="Genomic_DNA"/>
</dbReference>
<dbReference type="EMBL" id="CP002687">
    <property type="protein sequence ID" value="ANM66693.1"/>
    <property type="molecule type" value="Genomic_DNA"/>
</dbReference>
<dbReference type="EMBL" id="AY117173">
    <property type="protein sequence ID" value="AAM51248.1"/>
    <property type="molecule type" value="mRNA"/>
</dbReference>
<dbReference type="PIR" id="T04980">
    <property type="entry name" value="T04980"/>
</dbReference>
<dbReference type="RefSeq" id="NP_001328575.1">
    <property type="nucleotide sequence ID" value="NM_001342225.1"/>
</dbReference>
<dbReference type="RefSeq" id="NP_567929.1">
    <property type="nucleotide sequence ID" value="NM_119519.4"/>
</dbReference>
<dbReference type="RefSeq" id="NP_849488.1">
    <property type="nucleotide sequence ID" value="NM_179157.3"/>
</dbReference>
<dbReference type="SMR" id="Q93YW0"/>
<dbReference type="BioGRID" id="14786">
    <property type="interactions" value="3"/>
</dbReference>
<dbReference type="FunCoup" id="Q93YW0">
    <property type="interactions" value="1457"/>
</dbReference>
<dbReference type="STRING" id="3702.Q93YW0"/>
<dbReference type="PaxDb" id="3702-AT4G33630.2"/>
<dbReference type="ProteomicsDB" id="222331"/>
<dbReference type="EnsemblPlants" id="AT4G33630.1">
    <property type="protein sequence ID" value="AT4G33630.1"/>
    <property type="gene ID" value="AT4G33630"/>
</dbReference>
<dbReference type="EnsemblPlants" id="AT4G33630.2">
    <property type="protein sequence ID" value="AT4G33630.2"/>
    <property type="gene ID" value="AT4G33630"/>
</dbReference>
<dbReference type="EnsemblPlants" id="AT4G33630.3">
    <property type="protein sequence ID" value="AT4G33630.3"/>
    <property type="gene ID" value="AT4G33630"/>
</dbReference>
<dbReference type="GeneID" id="829504"/>
<dbReference type="Gramene" id="AT4G33630.1">
    <property type="protein sequence ID" value="AT4G33630.1"/>
    <property type="gene ID" value="AT4G33630"/>
</dbReference>
<dbReference type="Gramene" id="AT4G33630.2">
    <property type="protein sequence ID" value="AT4G33630.2"/>
    <property type="gene ID" value="AT4G33630"/>
</dbReference>
<dbReference type="Gramene" id="AT4G33630.3">
    <property type="protein sequence ID" value="AT4G33630.3"/>
    <property type="gene ID" value="AT4G33630"/>
</dbReference>
<dbReference type="KEGG" id="ath:AT4G33630"/>
<dbReference type="Araport" id="AT4G33630"/>
<dbReference type="TAIR" id="AT4G33630">
    <property type="gene designation" value="EX1"/>
</dbReference>
<dbReference type="eggNOG" id="ENOG502QQS3">
    <property type="taxonomic scope" value="Eukaryota"/>
</dbReference>
<dbReference type="HOGENOM" id="CLU_019201_0_0_1"/>
<dbReference type="InParanoid" id="Q93YW0"/>
<dbReference type="OMA" id="HNEGVNM"/>
<dbReference type="OrthoDB" id="722566at2759"/>
<dbReference type="PhylomeDB" id="Q93YW0"/>
<dbReference type="PRO" id="PR:Q93YW0"/>
<dbReference type="Proteomes" id="UP000006548">
    <property type="component" value="Chromosome 4"/>
</dbReference>
<dbReference type="ExpressionAtlas" id="Q93YW0">
    <property type="expression patterns" value="baseline and differential"/>
</dbReference>
<dbReference type="GO" id="GO:0009507">
    <property type="term" value="C:chloroplast"/>
    <property type="evidence" value="ECO:0007669"/>
    <property type="project" value="UniProtKB-SubCell"/>
</dbReference>
<dbReference type="GO" id="GO:0042651">
    <property type="term" value="C:thylakoid membrane"/>
    <property type="evidence" value="ECO:0000314"/>
    <property type="project" value="TAIR"/>
</dbReference>
<dbReference type="GO" id="GO:0010343">
    <property type="term" value="P:singlet oxygen-mediated programmed cell death"/>
    <property type="evidence" value="ECO:0000316"/>
    <property type="project" value="TAIR"/>
</dbReference>
<dbReference type="InterPro" id="IPR044680">
    <property type="entry name" value="EX1/2"/>
</dbReference>
<dbReference type="InterPro" id="IPR001943">
    <property type="entry name" value="UVR_dom"/>
</dbReference>
<dbReference type="PANTHER" id="PTHR33917">
    <property type="entry name" value="PROTEIN EXECUTER 1, CHLOROPLASTIC"/>
    <property type="match status" value="1"/>
</dbReference>
<dbReference type="PANTHER" id="PTHR33917:SF3">
    <property type="entry name" value="PROTEIN EXECUTER 1, CHLOROPLASTIC"/>
    <property type="match status" value="1"/>
</dbReference>
<dbReference type="Pfam" id="PF12014">
    <property type="entry name" value="Cyclin_D1_bind"/>
    <property type="match status" value="1"/>
</dbReference>
<dbReference type="Pfam" id="PF02151">
    <property type="entry name" value="UVR"/>
    <property type="match status" value="1"/>
</dbReference>
<evidence type="ECO:0000255" key="1"/>
<evidence type="ECO:0000255" key="2">
    <source>
        <dbReference type="PROSITE-ProRule" id="PRU00217"/>
    </source>
</evidence>
<evidence type="ECO:0000256" key="3">
    <source>
        <dbReference type="SAM" id="MobiDB-lite"/>
    </source>
</evidence>
<evidence type="ECO:0000269" key="4">
    <source>
    </source>
</evidence>
<evidence type="ECO:0000269" key="5">
    <source>
    </source>
</evidence>
<evidence type="ECO:0000269" key="6">
    <source>
    </source>
</evidence>
<evidence type="ECO:0000269" key="7">
    <source>
    </source>
</evidence>
<evidence type="ECO:0000303" key="8">
    <source>
    </source>
</evidence>
<evidence type="ECO:0000305" key="9"/>
<evidence type="ECO:0000312" key="10">
    <source>
        <dbReference type="Araport" id="AT4G33630"/>
    </source>
</evidence>
<evidence type="ECO:0000312" key="11">
    <source>
        <dbReference type="EMBL" id="CAA20576.1"/>
    </source>
</evidence>
<accession>Q93YW0</accession>
<accession>O81880</accession>
<sequence>MPSLSTPPSQNLAFSPAASATSSRLTPSSKRSFYPHRLPDPTALCRCSSSSGSNSSSSSSSDDNPRWDSAIQDVLKSAIKRFDSVLSWYATLDNDDGEQGSENVEKIDDDWDWDRWKKHFDQVDDQDRLLSVLKSQLNRAIKREDYEDAARLKVAIAATATNDAVGKVMSTFYRALLEERYKDAVYLRDKAGAGLVGWWSGISEDVKDPFGLIVQITAEHGRYVARSYNPRQLSTSAAGAPLFEIFLTLDGKGNYKKQAVYLKWKEIFPDVPTMPSRTLTPGRFLTSPGRKEDTGNLAVESSEDEESDNSDDDSDLLEESSGFQSFLRDMIPGVKVKVMKVTAPGRVDKDFISKVIEQIADEEDEENDLDIEDIDVEDDTKAEIDEKNADIELESVTDEIIDNNGGREIAVKFVIGDIVDRLSGNQPLKESLRSPANLESVENSSFYLRLEKDLNVKESKGVEGTTLVDGKGSRQSRRRIENIMGDLAKSIEKEKKISVKMLKDVGELLSLTLSQAQNRQQLSGLTKFRRIDVTPSLDPLDGLYIGAHGLYTSEVIHLKRKFGQWKGGKESKKPTDIEFYEYVEAVKLTGDPYVPAGKVAFRAKIGRRYELPHKGLIPEEFGVIARYKGQGRLADPGFRNPRWVDGELVILDGKYVKGGPVVGFVYWAPEYHFVMFFNRLRLQA</sequence>
<comment type="function">
    <text evidence="4 5 6">Together with EX2, enables higher plants to perceive singlet oxygen as a stress signal in plastid that activates a genetically determined nuclear stress response program which triggers a programmed cell death (PCD). This transfer of singlet oxygen-induced stress-related signals from the plastid to the nucleus that triggers genetically controlled PCD pathway is unique to photosynthetic eukaryotes and operates under mild stress conditions, impeding photosystem II (PSII) without causing photooxidative damage of the plant.</text>
</comment>
<comment type="subcellular location">
    <subcellularLocation>
        <location evidence="4 5">Plastid</location>
        <location evidence="4 5">Chloroplast</location>
    </subcellularLocation>
</comment>
<comment type="induction">
    <text evidence="7">Down-regulated by H(2)O(2).</text>
</comment>
<comment type="sequence caution" evidence="9">
    <conflict type="erroneous gene model prediction">
        <sequence resource="EMBL-CDS" id="CAA20576"/>
    </conflict>
</comment>
<comment type="sequence caution" evidence="9">
    <conflict type="erroneous gene model prediction">
        <sequence resource="EMBL-CDS" id="CAB80080"/>
    </conflict>
</comment>
<keyword id="KW-0150">Chloroplast</keyword>
<keyword id="KW-0934">Plastid</keyword>
<keyword id="KW-1185">Reference proteome</keyword>
<keyword id="KW-0346">Stress response</keyword>
<keyword id="KW-0809">Transit peptide</keyword>
<feature type="transit peptide" description="Chloroplast" evidence="1">
    <location>
        <begin position="1"/>
        <end position="46"/>
    </location>
</feature>
<feature type="chain" id="PRO_0000021215" description="Protein EXECUTER 1, chloroplastic">
    <location>
        <begin position="47"/>
        <end position="684"/>
    </location>
</feature>
<feature type="domain" description="UVR" evidence="2">
    <location>
        <begin position="127"/>
        <end position="162"/>
    </location>
</feature>
<feature type="region of interest" description="Disordered" evidence="3">
    <location>
        <begin position="1"/>
        <end position="66"/>
    </location>
</feature>
<feature type="region of interest" description="Disordered" evidence="3">
    <location>
        <begin position="278"/>
        <end position="318"/>
    </location>
</feature>
<feature type="compositionally biased region" description="Polar residues" evidence="3">
    <location>
        <begin position="1"/>
        <end position="31"/>
    </location>
</feature>
<feature type="compositionally biased region" description="Low complexity" evidence="3">
    <location>
        <begin position="48"/>
        <end position="61"/>
    </location>
</feature>
<feature type="compositionally biased region" description="Acidic residues" evidence="3">
    <location>
        <begin position="301"/>
        <end position="318"/>
    </location>
</feature>
<feature type="mutagenesis site" description="Loss of activity." evidence="4">
    <original>E</original>
    <variation>K</variation>
    <location>
        <position position="244"/>
    </location>
</feature>
<feature type="mutagenesis site" description="Loss of activity." evidence="4">
    <original>F</original>
    <variation>C</variation>
    <location>
        <position position="528"/>
    </location>
</feature>
<feature type="mutagenesis site" description="Loss of activity." evidence="4">
    <original>G</original>
    <variation>D</variation>
    <location>
        <position position="646"/>
    </location>
</feature>
<reference key="1">
    <citation type="journal article" date="2004" name="Science">
        <title>The genetic basis of singlet oxygen-induced stress responses of Arabidopsis thaliana.</title>
        <authorList>
            <person name="Wagner D."/>
            <person name="Przybyla D."/>
            <person name="Op den Camp R."/>
            <person name="Kim C."/>
            <person name="Landgraf F."/>
            <person name="Lee K.P."/>
            <person name="Wuersch M."/>
            <person name="Laloi C."/>
            <person name="Nater M."/>
            <person name="Hideg E."/>
            <person name="Apel K."/>
        </authorList>
    </citation>
    <scope>NUCLEOTIDE SEQUENCE [MRNA]</scope>
    <scope>FUNCTION</scope>
    <scope>SUBCELLULAR LOCATION</scope>
    <scope>MUTAGENESIS OF GLU-244; PHE-528 AND GLY-646</scope>
    <source>
        <strain>cv. Landsberg erecta</strain>
    </source>
</reference>
<reference key="2">
    <citation type="journal article" date="1999" name="Nature">
        <title>Sequence and analysis of chromosome 4 of the plant Arabidopsis thaliana.</title>
        <authorList>
            <person name="Mayer K.F.X."/>
            <person name="Schueller C."/>
            <person name="Wambutt R."/>
            <person name="Murphy G."/>
            <person name="Volckaert G."/>
            <person name="Pohl T."/>
            <person name="Duesterhoeft A."/>
            <person name="Stiekema W."/>
            <person name="Entian K.-D."/>
            <person name="Terryn N."/>
            <person name="Harris B."/>
            <person name="Ansorge W."/>
            <person name="Brandt P."/>
            <person name="Grivell L.A."/>
            <person name="Rieger M."/>
            <person name="Weichselgartner M."/>
            <person name="de Simone V."/>
            <person name="Obermaier B."/>
            <person name="Mache R."/>
            <person name="Mueller M."/>
            <person name="Kreis M."/>
            <person name="Delseny M."/>
            <person name="Puigdomenech P."/>
            <person name="Watson M."/>
            <person name="Schmidtheini T."/>
            <person name="Reichert B."/>
            <person name="Portetelle D."/>
            <person name="Perez-Alonso M."/>
            <person name="Boutry M."/>
            <person name="Bancroft I."/>
            <person name="Vos P."/>
            <person name="Hoheisel J."/>
            <person name="Zimmermann W."/>
            <person name="Wedler H."/>
            <person name="Ridley P."/>
            <person name="Langham S.-A."/>
            <person name="McCullagh B."/>
            <person name="Bilham L."/>
            <person name="Robben J."/>
            <person name="van der Schueren J."/>
            <person name="Grymonprez B."/>
            <person name="Chuang Y.-J."/>
            <person name="Vandenbussche F."/>
            <person name="Braeken M."/>
            <person name="Weltjens I."/>
            <person name="Voet M."/>
            <person name="Bastiaens I."/>
            <person name="Aert R."/>
            <person name="Defoor E."/>
            <person name="Weitzenegger T."/>
            <person name="Bothe G."/>
            <person name="Ramsperger U."/>
            <person name="Hilbert H."/>
            <person name="Braun M."/>
            <person name="Holzer E."/>
            <person name="Brandt A."/>
            <person name="Peters S."/>
            <person name="van Staveren M."/>
            <person name="Dirkse W."/>
            <person name="Mooijman P."/>
            <person name="Klein Lankhorst R."/>
            <person name="Rose M."/>
            <person name="Hauf J."/>
            <person name="Koetter P."/>
            <person name="Berneiser S."/>
            <person name="Hempel S."/>
            <person name="Feldpausch M."/>
            <person name="Lamberth S."/>
            <person name="Van den Daele H."/>
            <person name="De Keyser A."/>
            <person name="Buysshaert C."/>
            <person name="Gielen J."/>
            <person name="Villarroel R."/>
            <person name="De Clercq R."/>
            <person name="van Montagu M."/>
            <person name="Rogers J."/>
            <person name="Cronin A."/>
            <person name="Quail M.A."/>
            <person name="Bray-Allen S."/>
            <person name="Clark L."/>
            <person name="Doggett J."/>
            <person name="Hall S."/>
            <person name="Kay M."/>
            <person name="Lennard N."/>
            <person name="McLay K."/>
            <person name="Mayes R."/>
            <person name="Pettett A."/>
            <person name="Rajandream M.A."/>
            <person name="Lyne M."/>
            <person name="Benes V."/>
            <person name="Rechmann S."/>
            <person name="Borkova D."/>
            <person name="Bloecker H."/>
            <person name="Scharfe M."/>
            <person name="Grimm M."/>
            <person name="Loehnert T.-H."/>
            <person name="Dose S."/>
            <person name="de Haan M."/>
            <person name="Maarse A.C."/>
            <person name="Schaefer M."/>
            <person name="Mueller-Auer S."/>
            <person name="Gabel C."/>
            <person name="Fuchs M."/>
            <person name="Fartmann B."/>
            <person name="Granderath K."/>
            <person name="Dauner D."/>
            <person name="Herzl A."/>
            <person name="Neumann S."/>
            <person name="Argiriou A."/>
            <person name="Vitale D."/>
            <person name="Liguori R."/>
            <person name="Piravandi E."/>
            <person name="Massenet O."/>
            <person name="Quigley F."/>
            <person name="Clabauld G."/>
            <person name="Muendlein A."/>
            <person name="Felber R."/>
            <person name="Schnabl S."/>
            <person name="Hiller R."/>
            <person name="Schmidt W."/>
            <person name="Lecharny A."/>
            <person name="Aubourg S."/>
            <person name="Chefdor F."/>
            <person name="Cooke R."/>
            <person name="Berger C."/>
            <person name="Monfort A."/>
            <person name="Casacuberta E."/>
            <person name="Gibbons T."/>
            <person name="Weber N."/>
            <person name="Vandenbol M."/>
            <person name="Bargues M."/>
            <person name="Terol J."/>
            <person name="Torres A."/>
            <person name="Perez-Perez A."/>
            <person name="Purnelle B."/>
            <person name="Bent E."/>
            <person name="Johnson S."/>
            <person name="Tacon D."/>
            <person name="Jesse T."/>
            <person name="Heijnen L."/>
            <person name="Schwarz S."/>
            <person name="Scholler P."/>
            <person name="Heber S."/>
            <person name="Francs P."/>
            <person name="Bielke C."/>
            <person name="Frishman D."/>
            <person name="Haase D."/>
            <person name="Lemcke K."/>
            <person name="Mewes H.-W."/>
            <person name="Stocker S."/>
            <person name="Zaccaria P."/>
            <person name="Bevan M."/>
            <person name="Wilson R.K."/>
            <person name="de la Bastide M."/>
            <person name="Habermann K."/>
            <person name="Parnell L."/>
            <person name="Dedhia N."/>
            <person name="Gnoj L."/>
            <person name="Schutz K."/>
            <person name="Huang E."/>
            <person name="Spiegel L."/>
            <person name="Sekhon M."/>
            <person name="Murray J."/>
            <person name="Sheet P."/>
            <person name="Cordes M."/>
            <person name="Abu-Threideh J."/>
            <person name="Stoneking T."/>
            <person name="Kalicki J."/>
            <person name="Graves T."/>
            <person name="Harmon G."/>
            <person name="Edwards J."/>
            <person name="Latreille P."/>
            <person name="Courtney L."/>
            <person name="Cloud J."/>
            <person name="Abbott A."/>
            <person name="Scott K."/>
            <person name="Johnson D."/>
            <person name="Minx P."/>
            <person name="Bentley D."/>
            <person name="Fulton B."/>
            <person name="Miller N."/>
            <person name="Greco T."/>
            <person name="Kemp K."/>
            <person name="Kramer J."/>
            <person name="Fulton L."/>
            <person name="Mardis E."/>
            <person name="Dante M."/>
            <person name="Pepin K."/>
            <person name="Hillier L.W."/>
            <person name="Nelson J."/>
            <person name="Spieth J."/>
            <person name="Ryan E."/>
            <person name="Andrews S."/>
            <person name="Geisel C."/>
            <person name="Layman D."/>
            <person name="Du H."/>
            <person name="Ali J."/>
            <person name="Berghoff A."/>
            <person name="Jones K."/>
            <person name="Drone K."/>
            <person name="Cotton M."/>
            <person name="Joshu C."/>
            <person name="Antonoiu B."/>
            <person name="Zidanic M."/>
            <person name="Strong C."/>
            <person name="Sun H."/>
            <person name="Lamar B."/>
            <person name="Yordan C."/>
            <person name="Ma P."/>
            <person name="Zhong J."/>
            <person name="Preston R."/>
            <person name="Vil D."/>
            <person name="Shekher M."/>
            <person name="Matero A."/>
            <person name="Shah R."/>
            <person name="Swaby I.K."/>
            <person name="O'Shaughnessy A."/>
            <person name="Rodriguez M."/>
            <person name="Hoffman J."/>
            <person name="Till S."/>
            <person name="Granat S."/>
            <person name="Shohdy N."/>
            <person name="Hasegawa A."/>
            <person name="Hameed A."/>
            <person name="Lodhi M."/>
            <person name="Johnson A."/>
            <person name="Chen E."/>
            <person name="Marra M.A."/>
            <person name="Martienssen R."/>
            <person name="McCombie W.R."/>
        </authorList>
    </citation>
    <scope>NUCLEOTIDE SEQUENCE [LARGE SCALE GENOMIC DNA]</scope>
    <source>
        <strain>cv. Columbia</strain>
    </source>
</reference>
<reference key="3">
    <citation type="journal article" date="2017" name="Plant J.">
        <title>Araport11: a complete reannotation of the Arabidopsis thaliana reference genome.</title>
        <authorList>
            <person name="Cheng C.Y."/>
            <person name="Krishnakumar V."/>
            <person name="Chan A.P."/>
            <person name="Thibaud-Nissen F."/>
            <person name="Schobel S."/>
            <person name="Town C.D."/>
        </authorList>
    </citation>
    <scope>GENOME REANNOTATION</scope>
    <source>
        <strain>cv. Columbia</strain>
    </source>
</reference>
<reference key="4">
    <citation type="journal article" date="2003" name="Science">
        <title>Empirical analysis of transcriptional activity in the Arabidopsis genome.</title>
        <authorList>
            <person name="Yamada K."/>
            <person name="Lim J."/>
            <person name="Dale J.M."/>
            <person name="Chen H."/>
            <person name="Shinn P."/>
            <person name="Palm C.J."/>
            <person name="Southwick A.M."/>
            <person name="Wu H.C."/>
            <person name="Kim C.J."/>
            <person name="Nguyen M."/>
            <person name="Pham P.K."/>
            <person name="Cheuk R.F."/>
            <person name="Karlin-Newmann G."/>
            <person name="Liu S.X."/>
            <person name="Lam B."/>
            <person name="Sakano H."/>
            <person name="Wu T."/>
            <person name="Yu G."/>
            <person name="Miranda M."/>
            <person name="Quach H.L."/>
            <person name="Tripp M."/>
            <person name="Chang C.H."/>
            <person name="Lee J.M."/>
            <person name="Toriumi M.J."/>
            <person name="Chan M.M."/>
            <person name="Tang C.C."/>
            <person name="Onodera C.S."/>
            <person name="Deng J.M."/>
            <person name="Akiyama K."/>
            <person name="Ansari Y."/>
            <person name="Arakawa T."/>
            <person name="Banh J."/>
            <person name="Banno F."/>
            <person name="Bowser L."/>
            <person name="Brooks S.Y."/>
            <person name="Carninci P."/>
            <person name="Chao Q."/>
            <person name="Choy N."/>
            <person name="Enju A."/>
            <person name="Goldsmith A.D."/>
            <person name="Gurjal M."/>
            <person name="Hansen N.F."/>
            <person name="Hayashizaki Y."/>
            <person name="Johnson-Hopson C."/>
            <person name="Hsuan V.W."/>
            <person name="Iida K."/>
            <person name="Karnes M."/>
            <person name="Khan S."/>
            <person name="Koesema E."/>
            <person name="Ishida J."/>
            <person name="Jiang P.X."/>
            <person name="Jones T."/>
            <person name="Kawai J."/>
            <person name="Kamiya A."/>
            <person name="Meyers C."/>
            <person name="Nakajima M."/>
            <person name="Narusaka M."/>
            <person name="Seki M."/>
            <person name="Sakurai T."/>
            <person name="Satou M."/>
            <person name="Tamse R."/>
            <person name="Vaysberg M."/>
            <person name="Wallender E.K."/>
            <person name="Wong C."/>
            <person name="Yamamura Y."/>
            <person name="Yuan S."/>
            <person name="Shinozaki K."/>
            <person name="Davis R.W."/>
            <person name="Theologis A."/>
            <person name="Ecker J.R."/>
        </authorList>
    </citation>
    <scope>NUCLEOTIDE SEQUENCE [LARGE SCALE MRNA]</scope>
    <source>
        <strain>cv. Columbia</strain>
    </source>
</reference>
<reference key="5">
    <citation type="journal article" date="2007" name="Proc. Natl. Acad. Sci. U.S.A.">
        <title>EXECUTER1- and EXECUTER2-dependent transfer of stress-related signals from the plastid to the nucleus of Arabidopsis thaliana.</title>
        <authorList>
            <person name="Lee K.P."/>
            <person name="Kim C."/>
            <person name="Landgraf F."/>
            <person name="Apel K."/>
        </authorList>
    </citation>
    <scope>FUNCTION</scope>
    <scope>SUBCELLULAR LOCATION</scope>
</reference>
<reference key="6">
    <citation type="journal article" date="2012" name="Plant Cell">
        <title>Chloroplasts of Arabidopsis are the source and a primary target of a plant-specific programmed cell death signaling pathway.</title>
        <authorList>
            <person name="Kim C."/>
            <person name="Meskauskiene R."/>
            <person name="Zhang S."/>
            <person name="Lee K.P."/>
            <person name="Lakshmanan Ashok M."/>
            <person name="Blajecka K."/>
            <person name="Herrfurth C."/>
            <person name="Feussner I."/>
            <person name="Apel K."/>
        </authorList>
    </citation>
    <scope>FUNCTION</scope>
</reference>
<reference key="7">
    <citation type="journal article" date="2013" name="PLoS ONE">
        <title>Ethylene response factor 6 is a regulator of reactive oxygen species signaling in Arabidopsis.</title>
        <authorList>
            <person name="Sewelam N."/>
            <person name="Kazan K."/>
            <person name="Thomas-Hall S.R."/>
            <person name="Kidd B.N."/>
            <person name="Manners J.M."/>
            <person name="Schenk P.M."/>
        </authorList>
    </citation>
    <scope>INDUCTION</scope>
</reference>
<proteinExistence type="evidence at protein level"/>
<organism>
    <name type="scientific">Arabidopsis thaliana</name>
    <name type="common">Mouse-ear cress</name>
    <dbReference type="NCBI Taxonomy" id="3702"/>
    <lineage>
        <taxon>Eukaryota</taxon>
        <taxon>Viridiplantae</taxon>
        <taxon>Streptophyta</taxon>
        <taxon>Embryophyta</taxon>
        <taxon>Tracheophyta</taxon>
        <taxon>Spermatophyta</taxon>
        <taxon>Magnoliopsida</taxon>
        <taxon>eudicotyledons</taxon>
        <taxon>Gunneridae</taxon>
        <taxon>Pentapetalae</taxon>
        <taxon>rosids</taxon>
        <taxon>malvids</taxon>
        <taxon>Brassicales</taxon>
        <taxon>Brassicaceae</taxon>
        <taxon>Camelineae</taxon>
        <taxon>Arabidopsis</taxon>
    </lineage>
</organism>